<keyword id="KW-0106">Calcium</keyword>
<keyword id="KW-0107">Calcium channel</keyword>
<keyword id="KW-0109">Calcium transport</keyword>
<keyword id="KW-1003">Cell membrane</keyword>
<keyword id="KW-1015">Disulfide bond</keyword>
<keyword id="KW-0325">Glycoprotein</keyword>
<keyword id="KW-0407">Ion channel</keyword>
<keyword id="KW-0406">Ion transport</keyword>
<keyword id="KW-0472">Membrane</keyword>
<keyword id="KW-1185">Reference proteome</keyword>
<keyword id="KW-0812">Transmembrane</keyword>
<keyword id="KW-1133">Transmembrane helix</keyword>
<keyword id="KW-0813">Transport</keyword>
<keyword id="KW-0851">Voltage-gated channel</keyword>
<sequence length="224" mass="25093">MSQTKALKVRVTLFCILVGIVLALVAVVTDHWAVLSPHVEHLNATCEAAHFGLWRICTKRIAVGDSKDKSCGPITLPGEKNCSYFRHFNPGETSEIFHVTTQKEYSISAAAIAIFSLGFIILGTICGLLSFRKKRDYLLRPASMFYAFAGLCIFVSVEVMRQSVKRMIDSEDTVWIDYYYGWSFACACAAFILLFLGGIALLLFSLPRMPQYPWESCMDAEPEH</sequence>
<protein>
    <recommendedName>
        <fullName>Voltage-dependent calcium channel gamma-1 subunit</fullName>
    </recommendedName>
    <alternativeName>
        <fullName>Dihydropyridine-sensitive L-type, skeletal muscle calcium channel subunit gamma</fullName>
    </alternativeName>
</protein>
<accession>Q2MJQ7</accession>
<organism>
    <name type="scientific">Sus scrofa</name>
    <name type="common">Pig</name>
    <dbReference type="NCBI Taxonomy" id="9823"/>
    <lineage>
        <taxon>Eukaryota</taxon>
        <taxon>Metazoa</taxon>
        <taxon>Chordata</taxon>
        <taxon>Craniata</taxon>
        <taxon>Vertebrata</taxon>
        <taxon>Euteleostomi</taxon>
        <taxon>Mammalia</taxon>
        <taxon>Eutheria</taxon>
        <taxon>Laurasiatheria</taxon>
        <taxon>Artiodactyla</taxon>
        <taxon>Suina</taxon>
        <taxon>Suidae</taxon>
        <taxon>Sus</taxon>
    </lineage>
</organism>
<name>CCG1_PIG</name>
<dbReference type="EMBL" id="DQ323981">
    <property type="protein sequence ID" value="ABC54852.1"/>
    <property type="molecule type" value="mRNA"/>
</dbReference>
<dbReference type="RefSeq" id="NP_001038070.1">
    <property type="nucleotide sequence ID" value="NM_001044605.1"/>
</dbReference>
<dbReference type="SMR" id="Q2MJQ7"/>
<dbReference type="FunCoup" id="Q2MJQ7">
    <property type="interactions" value="717"/>
</dbReference>
<dbReference type="STRING" id="9823.ENSSSCP00000018299"/>
<dbReference type="GlyCosmos" id="Q2MJQ7">
    <property type="glycosylation" value="2 sites, No reported glycans"/>
</dbReference>
<dbReference type="GlyGen" id="Q2MJQ7">
    <property type="glycosylation" value="2 sites"/>
</dbReference>
<dbReference type="PaxDb" id="9823-ENSSSCP00000018299"/>
<dbReference type="PeptideAtlas" id="Q2MJQ7"/>
<dbReference type="Ensembl" id="ENSSSCT00000018801.3">
    <property type="protein sequence ID" value="ENSSSCP00000018299.1"/>
    <property type="gene ID" value="ENSSSCG00000017271.3"/>
</dbReference>
<dbReference type="Ensembl" id="ENSSSCT00015041199.1">
    <property type="protein sequence ID" value="ENSSSCP00015016282.1"/>
    <property type="gene ID" value="ENSSSCG00015031045.1"/>
</dbReference>
<dbReference type="Ensembl" id="ENSSSCT00025079056.1">
    <property type="protein sequence ID" value="ENSSSCP00025034322.1"/>
    <property type="gene ID" value="ENSSSCG00025057753.1"/>
</dbReference>
<dbReference type="Ensembl" id="ENSSSCT00030074053.1">
    <property type="protein sequence ID" value="ENSSSCP00030033910.1"/>
    <property type="gene ID" value="ENSSSCG00030053066.1"/>
</dbReference>
<dbReference type="Ensembl" id="ENSSSCT00040018271.1">
    <property type="protein sequence ID" value="ENSSSCP00040007495.1"/>
    <property type="gene ID" value="ENSSSCG00040013701.1"/>
</dbReference>
<dbReference type="Ensembl" id="ENSSSCT00060074592.1">
    <property type="protein sequence ID" value="ENSSSCP00060032194.1"/>
    <property type="gene ID" value="ENSSSCG00060054779.1"/>
</dbReference>
<dbReference type="Ensembl" id="ENSSSCT00085010883">
    <property type="protein sequence ID" value="ENSSSCP00085007736"/>
    <property type="gene ID" value="ENSSSCG00085005881"/>
</dbReference>
<dbReference type="Ensembl" id="ENSSSCT00090008474">
    <property type="protein sequence ID" value="ENSSSCP00090005092"/>
    <property type="gene ID" value="ENSSSCG00090004860"/>
</dbReference>
<dbReference type="Ensembl" id="ENSSSCT00105043731">
    <property type="protein sequence ID" value="ENSSSCP00105030483"/>
    <property type="gene ID" value="ENSSSCG00105022983"/>
</dbReference>
<dbReference type="Ensembl" id="ENSSSCT00115024258">
    <property type="protein sequence ID" value="ENSSSCP00115022999"/>
    <property type="gene ID" value="ENSSSCG00115013978"/>
</dbReference>
<dbReference type="GeneID" id="733677"/>
<dbReference type="KEGG" id="ssc:733677"/>
<dbReference type="CTD" id="786"/>
<dbReference type="VGNC" id="VGNC:86124">
    <property type="gene designation" value="CACNG1"/>
</dbReference>
<dbReference type="eggNOG" id="ENOG502QT5N">
    <property type="taxonomic scope" value="Eukaryota"/>
</dbReference>
<dbReference type="GeneTree" id="ENSGT00390000007786"/>
<dbReference type="HOGENOM" id="CLU_093876_0_0_1"/>
<dbReference type="InParanoid" id="Q2MJQ7"/>
<dbReference type="OMA" id="CIKRIFM"/>
<dbReference type="OrthoDB" id="9937541at2759"/>
<dbReference type="TreeFam" id="TF331651"/>
<dbReference type="Proteomes" id="UP000008227">
    <property type="component" value="Chromosome 12"/>
</dbReference>
<dbReference type="Proteomes" id="UP000314985">
    <property type="component" value="Unplaced"/>
</dbReference>
<dbReference type="Proteomes" id="UP000694570">
    <property type="component" value="Unplaced"/>
</dbReference>
<dbReference type="Proteomes" id="UP000694571">
    <property type="component" value="Unplaced"/>
</dbReference>
<dbReference type="Proteomes" id="UP000694720">
    <property type="component" value="Unplaced"/>
</dbReference>
<dbReference type="Proteomes" id="UP000694722">
    <property type="component" value="Unplaced"/>
</dbReference>
<dbReference type="Proteomes" id="UP000694723">
    <property type="component" value="Unplaced"/>
</dbReference>
<dbReference type="Proteomes" id="UP000694724">
    <property type="component" value="Unplaced"/>
</dbReference>
<dbReference type="Proteomes" id="UP000694725">
    <property type="component" value="Unplaced"/>
</dbReference>
<dbReference type="Proteomes" id="UP000694726">
    <property type="component" value="Unplaced"/>
</dbReference>
<dbReference type="Proteomes" id="UP000694727">
    <property type="component" value="Unplaced"/>
</dbReference>
<dbReference type="Proteomes" id="UP000694728">
    <property type="component" value="Unplaced"/>
</dbReference>
<dbReference type="Bgee" id="ENSSSCG00000017271">
    <property type="expression patterns" value="Expressed in longissimus lumborum muscle and 6 other cell types or tissues"/>
</dbReference>
<dbReference type="GO" id="GO:1990454">
    <property type="term" value="C:L-type voltage-gated calcium channel complex"/>
    <property type="evidence" value="ECO:0000250"/>
    <property type="project" value="UniProtKB"/>
</dbReference>
<dbReference type="GO" id="GO:0005886">
    <property type="term" value="C:plasma membrane"/>
    <property type="evidence" value="ECO:0000250"/>
    <property type="project" value="UniProtKB"/>
</dbReference>
<dbReference type="GO" id="GO:0042383">
    <property type="term" value="C:sarcolemma"/>
    <property type="evidence" value="ECO:0000250"/>
    <property type="project" value="UniProtKB"/>
</dbReference>
<dbReference type="GO" id="GO:0030315">
    <property type="term" value="C:T-tubule"/>
    <property type="evidence" value="ECO:0000250"/>
    <property type="project" value="UniProtKB"/>
</dbReference>
<dbReference type="GO" id="GO:0005246">
    <property type="term" value="F:calcium channel regulator activity"/>
    <property type="evidence" value="ECO:0000250"/>
    <property type="project" value="UniProtKB"/>
</dbReference>
<dbReference type="GO" id="GO:0005245">
    <property type="term" value="F:voltage-gated calcium channel activity"/>
    <property type="evidence" value="ECO:0007669"/>
    <property type="project" value="Ensembl"/>
</dbReference>
<dbReference type="GO" id="GO:0051649">
    <property type="term" value="P:establishment of localization in cell"/>
    <property type="evidence" value="ECO:0007669"/>
    <property type="project" value="Ensembl"/>
</dbReference>
<dbReference type="GO" id="GO:1902514">
    <property type="term" value="P:regulation of calcium ion transmembrane transport via high voltage-gated calcium channel"/>
    <property type="evidence" value="ECO:0000250"/>
    <property type="project" value="UniProtKB"/>
</dbReference>
<dbReference type="GO" id="GO:0070296">
    <property type="term" value="P:sarcoplasmic reticulum calcium ion transport"/>
    <property type="evidence" value="ECO:0007669"/>
    <property type="project" value="Ensembl"/>
</dbReference>
<dbReference type="FunFam" id="1.20.140.150:FF:000031">
    <property type="entry name" value="Voltage-dependent calcium channel gamma-1 subunit"/>
    <property type="match status" value="1"/>
</dbReference>
<dbReference type="Gene3D" id="1.20.140.150">
    <property type="match status" value="1"/>
</dbReference>
<dbReference type="InterPro" id="IPR004031">
    <property type="entry name" value="PMP22/EMP/MP20/Claudin"/>
</dbReference>
<dbReference type="InterPro" id="IPR005421">
    <property type="entry name" value="VDCC_g1su"/>
</dbReference>
<dbReference type="InterPro" id="IPR008368">
    <property type="entry name" value="VDCC_gsu"/>
</dbReference>
<dbReference type="PANTHER" id="PTHR15025:SF1">
    <property type="entry name" value="VOLTAGE-DEPENDENT CALCIUM CHANNEL GAMMA-1 SUBUNIT"/>
    <property type="match status" value="1"/>
</dbReference>
<dbReference type="PANTHER" id="PTHR15025">
    <property type="entry name" value="VOLTAGE-DEPENDENT CALCIUM CHANNEL GAMMA-1 SUBUNIT-RELATED"/>
    <property type="match status" value="1"/>
</dbReference>
<dbReference type="Pfam" id="PF13903">
    <property type="entry name" value="Claudin_2"/>
    <property type="match status" value="1"/>
</dbReference>
<dbReference type="PRINTS" id="PR01792">
    <property type="entry name" value="VDCCGAMMA"/>
</dbReference>
<dbReference type="PRINTS" id="PR01601">
    <property type="entry name" value="VDCCGAMMA1"/>
</dbReference>
<comment type="function">
    <text evidence="1">Regulatory subunit of the voltage-gated calcium channel that gives rise to L-type calcium currents in skeletal muscle. Regulates channel inactivation kinetics.</text>
</comment>
<comment type="subunit">
    <text evidence="1">Component of a calcium channel complex consisting of a pore-forming alpha subunit (CACNA1S) and the ancillary subunits CACNB1 or CACNB2, CACNG1 and CACNA2D1. The channel complex contains alpha, beta, gamma and delta subunits in a 1:1:1:1 ratio, i.e. it contains either CACNB1 or CACNB2.</text>
</comment>
<comment type="subcellular location">
    <subcellularLocation>
        <location evidence="1">Cell membrane</location>
        <location evidence="1">Sarcolemma</location>
        <topology evidence="1">Multi-pass membrane protein</topology>
    </subcellularLocation>
</comment>
<comment type="PTM">
    <text evidence="1">N-glycosylated.</text>
</comment>
<comment type="similarity">
    <text evidence="3">Belongs to the PMP-22/EMP/MP20 family. CACNG subfamily.</text>
</comment>
<feature type="chain" id="PRO_0000261026" description="Voltage-dependent calcium channel gamma-1 subunit">
    <location>
        <begin position="1"/>
        <end position="224"/>
    </location>
</feature>
<feature type="topological domain" description="Cytoplasmic" evidence="3">
    <location>
        <begin position="1"/>
        <end position="10"/>
    </location>
</feature>
<feature type="transmembrane region" description="Helical" evidence="1">
    <location>
        <begin position="11"/>
        <end position="29"/>
    </location>
</feature>
<feature type="topological domain" description="Extracellular" evidence="3">
    <location>
        <begin position="30"/>
        <end position="110"/>
    </location>
</feature>
<feature type="transmembrane region" description="Helical" evidence="1">
    <location>
        <begin position="111"/>
        <end position="131"/>
    </location>
</feature>
<feature type="topological domain" description="Cytoplasmic" evidence="3">
    <location>
        <begin position="132"/>
        <end position="136"/>
    </location>
</feature>
<feature type="transmembrane region" description="Helical" evidence="1">
    <location>
        <begin position="137"/>
        <end position="157"/>
    </location>
</feature>
<feature type="topological domain" description="Extracellular" evidence="3">
    <location>
        <begin position="158"/>
        <end position="181"/>
    </location>
</feature>
<feature type="transmembrane region" description="Helical" evidence="1">
    <location>
        <begin position="182"/>
        <end position="206"/>
    </location>
</feature>
<feature type="topological domain" description="Cytoplasmic" evidence="3">
    <location>
        <begin position="207"/>
        <end position="224"/>
    </location>
</feature>
<feature type="glycosylation site" description="N-linked (GlcNAc...) asparagine" evidence="2">
    <location>
        <position position="43"/>
    </location>
</feature>
<feature type="glycosylation site" description="N-linked (GlcNAc...) asparagine" evidence="2">
    <location>
        <position position="81"/>
    </location>
</feature>
<feature type="disulfide bond" evidence="1">
    <location>
        <begin position="57"/>
        <end position="82"/>
    </location>
</feature>
<reference key="1">
    <citation type="submission" date="2005-12" db="EMBL/GenBank/DDBJ databases">
        <title>Isolation and characterization of the porcine CACNG1 gene.</title>
        <authorList>
            <person name="He B."/>
            <person name="Xiong Y.Z."/>
            <person name="Zheng R."/>
        </authorList>
    </citation>
    <scope>NUCLEOTIDE SEQUENCE [MRNA]</scope>
    <source>
        <tissue>Muscle</tissue>
    </source>
</reference>
<proteinExistence type="evidence at transcript level"/>
<evidence type="ECO:0000250" key="1">
    <source>
        <dbReference type="UniProtKB" id="P19518"/>
    </source>
</evidence>
<evidence type="ECO:0000255" key="2"/>
<evidence type="ECO:0000305" key="3"/>
<gene>
    <name type="primary">CACNG1</name>
</gene>